<gene>
    <name evidence="1" type="primary">uppS</name>
    <name type="ordered locus">LIC_10854</name>
</gene>
<accession>Q72U10</accession>
<keyword id="KW-0460">Magnesium</keyword>
<keyword id="KW-0479">Metal-binding</keyword>
<keyword id="KW-0808">Transferase</keyword>
<protein>
    <recommendedName>
        <fullName evidence="1">Isoprenyl transferase</fullName>
        <ecNumber evidence="1">2.5.1.-</ecNumber>
    </recommendedName>
</protein>
<name>ISPT_LEPIC</name>
<reference key="1">
    <citation type="journal article" date="2004" name="J. Bacteriol.">
        <title>Comparative genomics of two Leptospira interrogans serovars reveals novel insights into physiology and pathogenesis.</title>
        <authorList>
            <person name="Nascimento A.L.T.O."/>
            <person name="Ko A.I."/>
            <person name="Martins E.A.L."/>
            <person name="Monteiro-Vitorello C.B."/>
            <person name="Ho P.L."/>
            <person name="Haake D.A."/>
            <person name="Verjovski-Almeida S."/>
            <person name="Hartskeerl R.A."/>
            <person name="Marques M.V."/>
            <person name="Oliveira M.C."/>
            <person name="Menck C.F.M."/>
            <person name="Leite L.C.C."/>
            <person name="Carrer H."/>
            <person name="Coutinho L.L."/>
            <person name="Degrave W.M."/>
            <person name="Dellagostin O.A."/>
            <person name="El-Dorry H."/>
            <person name="Ferro E.S."/>
            <person name="Ferro M.I.T."/>
            <person name="Furlan L.R."/>
            <person name="Gamberini M."/>
            <person name="Giglioti E.A."/>
            <person name="Goes-Neto A."/>
            <person name="Goldman G.H."/>
            <person name="Goldman M.H.S."/>
            <person name="Harakava R."/>
            <person name="Jeronimo S.M.B."/>
            <person name="Junqueira-de-Azevedo I.L.M."/>
            <person name="Kimura E.T."/>
            <person name="Kuramae E.E."/>
            <person name="Lemos E.G.M."/>
            <person name="Lemos M.V.F."/>
            <person name="Marino C.L."/>
            <person name="Nunes L.R."/>
            <person name="de Oliveira R.C."/>
            <person name="Pereira G.G."/>
            <person name="Reis M.S."/>
            <person name="Schriefer A."/>
            <person name="Siqueira W.J."/>
            <person name="Sommer P."/>
            <person name="Tsai S.M."/>
            <person name="Simpson A.J.G."/>
            <person name="Ferro J.A."/>
            <person name="Camargo L.E.A."/>
            <person name="Kitajima J.P."/>
            <person name="Setubal J.C."/>
            <person name="Van Sluys M.A."/>
        </authorList>
    </citation>
    <scope>NUCLEOTIDE SEQUENCE [LARGE SCALE GENOMIC DNA]</scope>
    <source>
        <strain>Fiocruz L1-130</strain>
    </source>
</reference>
<organism>
    <name type="scientific">Leptospira interrogans serogroup Icterohaemorrhagiae serovar copenhageni (strain Fiocruz L1-130)</name>
    <dbReference type="NCBI Taxonomy" id="267671"/>
    <lineage>
        <taxon>Bacteria</taxon>
        <taxon>Pseudomonadati</taxon>
        <taxon>Spirochaetota</taxon>
        <taxon>Spirochaetia</taxon>
        <taxon>Leptospirales</taxon>
        <taxon>Leptospiraceae</taxon>
        <taxon>Leptospira</taxon>
    </lineage>
</organism>
<evidence type="ECO:0000255" key="1">
    <source>
        <dbReference type="HAMAP-Rule" id="MF_01139"/>
    </source>
</evidence>
<dbReference type="EC" id="2.5.1.-" evidence="1"/>
<dbReference type="EMBL" id="AE016823">
    <property type="protein sequence ID" value="AAS69468.1"/>
    <property type="molecule type" value="Genomic_DNA"/>
</dbReference>
<dbReference type="SMR" id="Q72U10"/>
<dbReference type="KEGG" id="lic:LIC_10854"/>
<dbReference type="HOGENOM" id="CLU_038505_1_1_12"/>
<dbReference type="Proteomes" id="UP000007037">
    <property type="component" value="Chromosome I"/>
</dbReference>
<dbReference type="GO" id="GO:0045547">
    <property type="term" value="F:ditrans,polycis-polyprenyl diphosphate synthase [(2E,6E)-farnesyl diphosphate specific] activity"/>
    <property type="evidence" value="ECO:0007669"/>
    <property type="project" value="TreeGrafter"/>
</dbReference>
<dbReference type="GO" id="GO:0000287">
    <property type="term" value="F:magnesium ion binding"/>
    <property type="evidence" value="ECO:0007669"/>
    <property type="project" value="UniProtKB-UniRule"/>
</dbReference>
<dbReference type="GO" id="GO:0016094">
    <property type="term" value="P:polyprenol biosynthetic process"/>
    <property type="evidence" value="ECO:0007669"/>
    <property type="project" value="TreeGrafter"/>
</dbReference>
<dbReference type="CDD" id="cd00475">
    <property type="entry name" value="Cis_IPPS"/>
    <property type="match status" value="1"/>
</dbReference>
<dbReference type="Gene3D" id="3.40.1180.10">
    <property type="entry name" value="Decaprenyl diphosphate synthase-like"/>
    <property type="match status" value="1"/>
</dbReference>
<dbReference type="HAMAP" id="MF_01139">
    <property type="entry name" value="ISPT"/>
    <property type="match status" value="1"/>
</dbReference>
<dbReference type="InterPro" id="IPR001441">
    <property type="entry name" value="UPP_synth-like"/>
</dbReference>
<dbReference type="InterPro" id="IPR018520">
    <property type="entry name" value="UPP_synth-like_CS"/>
</dbReference>
<dbReference type="InterPro" id="IPR036424">
    <property type="entry name" value="UPP_synth-like_sf"/>
</dbReference>
<dbReference type="NCBIfam" id="NF011415">
    <property type="entry name" value="PRK14842.1"/>
    <property type="match status" value="1"/>
</dbReference>
<dbReference type="NCBIfam" id="TIGR00055">
    <property type="entry name" value="uppS"/>
    <property type="match status" value="1"/>
</dbReference>
<dbReference type="PANTHER" id="PTHR10291:SF0">
    <property type="entry name" value="DEHYDRODOLICHYL DIPHOSPHATE SYNTHASE 2"/>
    <property type="match status" value="1"/>
</dbReference>
<dbReference type="PANTHER" id="PTHR10291">
    <property type="entry name" value="DEHYDRODOLICHYL DIPHOSPHATE SYNTHASE FAMILY MEMBER"/>
    <property type="match status" value="1"/>
</dbReference>
<dbReference type="Pfam" id="PF01255">
    <property type="entry name" value="Prenyltransf"/>
    <property type="match status" value="1"/>
</dbReference>
<dbReference type="SUPFAM" id="SSF64005">
    <property type="entry name" value="Undecaprenyl diphosphate synthase"/>
    <property type="match status" value="1"/>
</dbReference>
<dbReference type="PROSITE" id="PS01066">
    <property type="entry name" value="UPP_SYNTHASE"/>
    <property type="match status" value="1"/>
</dbReference>
<comment type="function">
    <text evidence="1">Catalyzes the condensation of isopentenyl diphosphate (IPP) with allylic pyrophosphates generating different type of terpenoids.</text>
</comment>
<comment type="cofactor">
    <cofactor evidence="1">
        <name>Mg(2+)</name>
        <dbReference type="ChEBI" id="CHEBI:18420"/>
    </cofactor>
    <text evidence="1">Binds 2 magnesium ions per subunit.</text>
</comment>
<comment type="subunit">
    <text evidence="1">Homodimer.</text>
</comment>
<comment type="similarity">
    <text evidence="1">Belongs to the UPP synthase family.</text>
</comment>
<sequence>MGLFESNLPKHIAVIMDGNGRWATSRGKSRSEGHREGAQAIDRLMDASLELGLKNISLYAFSTENWKRPVTEIRSIFSLLIEFIETRLDTIHKRGIRILHSGSRKKLTRGVLDKIDFAVDKTQKNKNLTVNFCLNYGSRDELLRAAQELFLERKRSKVALEKPLKEKEFEKFLYTSILPPVDLLIRTAGEQRLSNFLLWQSAYAELYFTDTLWPEFDKNSLVDSLKWYETRTRKFGGLTNG</sequence>
<proteinExistence type="inferred from homology"/>
<feature type="chain" id="PRO_0000123632" description="Isoprenyl transferase">
    <location>
        <begin position="1"/>
        <end position="241"/>
    </location>
</feature>
<feature type="active site" evidence="1">
    <location>
        <position position="17"/>
    </location>
</feature>
<feature type="active site" description="Proton acceptor" evidence="1">
    <location>
        <position position="65"/>
    </location>
</feature>
<feature type="binding site" evidence="1">
    <location>
        <position position="17"/>
    </location>
    <ligand>
        <name>Mg(2+)</name>
        <dbReference type="ChEBI" id="CHEBI:18420"/>
    </ligand>
</feature>
<feature type="binding site" evidence="1">
    <location>
        <begin position="18"/>
        <end position="21"/>
    </location>
    <ligand>
        <name>substrate</name>
    </ligand>
</feature>
<feature type="binding site" evidence="1">
    <location>
        <position position="22"/>
    </location>
    <ligand>
        <name>substrate</name>
    </ligand>
</feature>
<feature type="binding site" evidence="1">
    <location>
        <position position="30"/>
    </location>
    <ligand>
        <name>substrate</name>
    </ligand>
</feature>
<feature type="binding site" evidence="1">
    <location>
        <position position="34"/>
    </location>
    <ligand>
        <name>substrate</name>
    </ligand>
</feature>
<feature type="binding site" evidence="1">
    <location>
        <begin position="62"/>
        <end position="64"/>
    </location>
    <ligand>
        <name>substrate</name>
    </ligand>
</feature>
<feature type="binding site" evidence="1">
    <location>
        <position position="66"/>
    </location>
    <ligand>
        <name>substrate</name>
    </ligand>
</feature>
<feature type="binding site" evidence="1">
    <location>
        <position position="68"/>
    </location>
    <ligand>
        <name>substrate</name>
    </ligand>
</feature>
<feature type="binding site" evidence="1">
    <location>
        <position position="186"/>
    </location>
    <ligand>
        <name>substrate</name>
    </ligand>
</feature>
<feature type="binding site" evidence="1">
    <location>
        <begin position="192"/>
        <end position="194"/>
    </location>
    <ligand>
        <name>substrate</name>
    </ligand>
</feature>
<feature type="binding site" evidence="1">
    <location>
        <position position="205"/>
    </location>
    <ligand>
        <name>Mg(2+)</name>
        <dbReference type="ChEBI" id="CHEBI:18420"/>
    </ligand>
</feature>